<protein>
    <recommendedName>
        <fullName>Catalase</fullName>
        <ecNumber>1.11.1.6</ecNumber>
    </recommendedName>
</protein>
<proteinExistence type="inferred from homology"/>
<gene>
    <name type="primary">katA</name>
</gene>
<keyword id="KW-0963">Cytoplasm</keyword>
<keyword id="KW-0349">Heme</keyword>
<keyword id="KW-0376">Hydrogen peroxide</keyword>
<keyword id="KW-0408">Iron</keyword>
<keyword id="KW-0479">Metal-binding</keyword>
<keyword id="KW-0560">Oxidoreductase</keyword>
<keyword id="KW-0575">Peroxidase</keyword>
<dbReference type="EC" id="1.11.1.6"/>
<dbReference type="EMBL" id="M84015">
    <property type="protein sequence ID" value="AAC19139.1"/>
    <property type="molecule type" value="Genomic_DNA"/>
</dbReference>
<dbReference type="PIR" id="T09652">
    <property type="entry name" value="T09652"/>
</dbReference>
<dbReference type="SMR" id="P30265"/>
<dbReference type="GO" id="GO:0005737">
    <property type="term" value="C:cytoplasm"/>
    <property type="evidence" value="ECO:0007669"/>
    <property type="project" value="UniProtKB-SubCell"/>
</dbReference>
<dbReference type="GO" id="GO:0004096">
    <property type="term" value="F:catalase activity"/>
    <property type="evidence" value="ECO:0007669"/>
    <property type="project" value="UniProtKB-EC"/>
</dbReference>
<dbReference type="GO" id="GO:0020037">
    <property type="term" value="F:heme binding"/>
    <property type="evidence" value="ECO:0007669"/>
    <property type="project" value="InterPro"/>
</dbReference>
<dbReference type="GO" id="GO:0046872">
    <property type="term" value="F:metal ion binding"/>
    <property type="evidence" value="ECO:0007669"/>
    <property type="project" value="UniProtKB-KW"/>
</dbReference>
<dbReference type="GO" id="GO:0042744">
    <property type="term" value="P:hydrogen peroxide catabolic process"/>
    <property type="evidence" value="ECO:0007669"/>
    <property type="project" value="UniProtKB-KW"/>
</dbReference>
<dbReference type="GO" id="GO:0042542">
    <property type="term" value="P:response to hydrogen peroxide"/>
    <property type="evidence" value="ECO:0007669"/>
    <property type="project" value="TreeGrafter"/>
</dbReference>
<dbReference type="CDD" id="cd08156">
    <property type="entry name" value="catalase_clade_3"/>
    <property type="match status" value="1"/>
</dbReference>
<dbReference type="FunFam" id="2.40.180.10:FF:000001">
    <property type="entry name" value="Catalase"/>
    <property type="match status" value="1"/>
</dbReference>
<dbReference type="Gene3D" id="2.40.180.10">
    <property type="entry name" value="Catalase core domain"/>
    <property type="match status" value="1"/>
</dbReference>
<dbReference type="InterPro" id="IPR018028">
    <property type="entry name" value="Catalase"/>
</dbReference>
<dbReference type="InterPro" id="IPR040333">
    <property type="entry name" value="Catalase_3"/>
</dbReference>
<dbReference type="InterPro" id="IPR024708">
    <property type="entry name" value="Catalase_AS"/>
</dbReference>
<dbReference type="InterPro" id="IPR024711">
    <property type="entry name" value="Catalase_clade1/3"/>
</dbReference>
<dbReference type="InterPro" id="IPR011614">
    <property type="entry name" value="Catalase_core"/>
</dbReference>
<dbReference type="InterPro" id="IPR002226">
    <property type="entry name" value="Catalase_haem_BS"/>
</dbReference>
<dbReference type="InterPro" id="IPR010582">
    <property type="entry name" value="Catalase_immune_responsive"/>
</dbReference>
<dbReference type="InterPro" id="IPR020835">
    <property type="entry name" value="Catalase_sf"/>
</dbReference>
<dbReference type="PANTHER" id="PTHR11465">
    <property type="entry name" value="CATALASE"/>
    <property type="match status" value="1"/>
</dbReference>
<dbReference type="PANTHER" id="PTHR11465:SF9">
    <property type="entry name" value="CATALASE"/>
    <property type="match status" value="1"/>
</dbReference>
<dbReference type="Pfam" id="PF00199">
    <property type="entry name" value="Catalase"/>
    <property type="match status" value="1"/>
</dbReference>
<dbReference type="Pfam" id="PF06628">
    <property type="entry name" value="Catalase-rel"/>
    <property type="match status" value="1"/>
</dbReference>
<dbReference type="PIRSF" id="PIRSF038928">
    <property type="entry name" value="Catalase_clade1-3"/>
    <property type="match status" value="1"/>
</dbReference>
<dbReference type="PRINTS" id="PR00067">
    <property type="entry name" value="CATALASE"/>
</dbReference>
<dbReference type="SMART" id="SM01060">
    <property type="entry name" value="Catalase"/>
    <property type="match status" value="1"/>
</dbReference>
<dbReference type="SUPFAM" id="SSF56634">
    <property type="entry name" value="Heme-dependent catalase-like"/>
    <property type="match status" value="1"/>
</dbReference>
<dbReference type="PROSITE" id="PS00437">
    <property type="entry name" value="CATALASE_1"/>
    <property type="match status" value="1"/>
</dbReference>
<dbReference type="PROSITE" id="PS00438">
    <property type="entry name" value="CATALASE_2"/>
    <property type="match status" value="1"/>
</dbReference>
<dbReference type="PROSITE" id="PS51402">
    <property type="entry name" value="CATALASE_3"/>
    <property type="match status" value="1"/>
</dbReference>
<organism>
    <name type="scientific">Latilactobacillus sakei</name>
    <name type="common">Lactobacillus sakei</name>
    <dbReference type="NCBI Taxonomy" id="1599"/>
    <lineage>
        <taxon>Bacteria</taxon>
        <taxon>Bacillati</taxon>
        <taxon>Bacillota</taxon>
        <taxon>Bacilli</taxon>
        <taxon>Lactobacillales</taxon>
        <taxon>Lactobacillaceae</taxon>
        <taxon>Latilactobacillus</taxon>
    </lineage>
</organism>
<reference key="1">
    <citation type="journal article" date="1992" name="Appl. Environ. Microbiol.">
        <title>Cloning, sequence, and phenotypic expression of katA, which encodes the catalase of Lactobacillus sake LTH677.</title>
        <authorList>
            <person name="Knauf H.J."/>
            <person name="Vogel R.F."/>
            <person name="Hammes W.P."/>
        </authorList>
    </citation>
    <scope>NUCLEOTIDE SEQUENCE [GENOMIC DNA]</scope>
    <source>
        <strain>LTH677</strain>
    </source>
</reference>
<reference key="2">
    <citation type="journal article" date="1998" name="Appl. Environ. Microbiol.">
        <title>Oxygen-dependent regulation of the expression of the catalase gene katA of Lactobacillus sakei LTH677.</title>
        <authorList>
            <person name="Hertel C."/>
            <person name="Schmidt G."/>
            <person name="Fischer M."/>
            <person name="Oellers K."/>
            <person name="Hammes W.P."/>
        </authorList>
    </citation>
    <scope>NUCLEOTIDE SEQUENCE [GENOMIC DNA]</scope>
    <scope>SEQUENCE REVISION</scope>
    <source>
        <strain>LTH677</strain>
    </source>
</reference>
<comment type="function">
    <text>Decomposes hydrogen peroxide into water and oxygen; serves to protect cells from the toxic effects of hydrogen peroxide.</text>
</comment>
<comment type="catalytic activity">
    <reaction evidence="2">
        <text>2 H2O2 = O2 + 2 H2O</text>
        <dbReference type="Rhea" id="RHEA:20309"/>
        <dbReference type="ChEBI" id="CHEBI:15377"/>
        <dbReference type="ChEBI" id="CHEBI:15379"/>
        <dbReference type="ChEBI" id="CHEBI:16240"/>
        <dbReference type="EC" id="1.11.1.6"/>
    </reaction>
</comment>
<comment type="cofactor">
    <cofactor>
        <name>heme</name>
        <dbReference type="ChEBI" id="CHEBI:30413"/>
    </cofactor>
</comment>
<comment type="subcellular location">
    <subcellularLocation>
        <location evidence="4">Cytoplasm</location>
    </subcellularLocation>
</comment>
<comment type="similarity">
    <text evidence="4">Belongs to the catalase family.</text>
</comment>
<sequence length="478" mass="54076">MTNQLTTNEGQPWADNQHSQTAGQRGPVLIQDYQLLEKLAHFNRERIPERVVHAKGAGAKGYFKVTKDMSAYTKAAVFSGVGKKTPLITRFSQVAGEAGYPDTYRDVRGFAVKFYTEEGNYDIVGNNTPVFFVNDPLKFPDFIHSQKRDPRTHARSQDMQWDFWSLSPESVHQVTILMSDRGIPASYRMMHGFGSHTFKWVNAQGEQFWVKYHFKTNQGIHNLSNELADELAGKDTDYLQNDLFDAIETGDYPSWTVAVQLVPYEDGLNYPQDIFDVTKVISQKDYPLIEIGQMVLDENPTNNFEDIQELAFSPANLVPGIEASPDKLLQGRLFGYKDAERYRLGANYEQLPVNRPKVPVHNYERDGAMAQNQATGVNYEPNSQDGPTEVPAAKIHGDQLSGTTGNFSADPDYYSAAGKLYRLLSADEQTRLIENIRMNLGQVTKPEIQIREVKQFYQADPEYGRRVATSVKLRFSSV</sequence>
<feature type="chain" id="PRO_0000084989" description="Catalase">
    <location>
        <begin position="1"/>
        <end position="478"/>
    </location>
</feature>
<feature type="region of interest" description="Disordered" evidence="3">
    <location>
        <begin position="1"/>
        <end position="23"/>
    </location>
</feature>
<feature type="active site" evidence="2">
    <location>
        <position position="53"/>
    </location>
</feature>
<feature type="active site" evidence="2">
    <location>
        <position position="126"/>
    </location>
</feature>
<feature type="binding site" description="axial binding residue" evidence="1">
    <location>
        <position position="336"/>
    </location>
    <ligand>
        <name>heme</name>
        <dbReference type="ChEBI" id="CHEBI:30413"/>
    </ligand>
    <ligandPart>
        <name>Fe</name>
        <dbReference type="ChEBI" id="CHEBI:18248"/>
    </ligandPart>
</feature>
<evidence type="ECO:0000250" key="1"/>
<evidence type="ECO:0000255" key="2">
    <source>
        <dbReference type="PROSITE-ProRule" id="PRU10013"/>
    </source>
</evidence>
<evidence type="ECO:0000256" key="3">
    <source>
        <dbReference type="SAM" id="MobiDB-lite"/>
    </source>
</evidence>
<evidence type="ECO:0000305" key="4"/>
<accession>P30265</accession>
<name>CATA_LATSK</name>